<organism>
    <name type="scientific">Anoxybacillus flavithermus (strain DSM 21510 / WK1)</name>
    <dbReference type="NCBI Taxonomy" id="491915"/>
    <lineage>
        <taxon>Bacteria</taxon>
        <taxon>Bacillati</taxon>
        <taxon>Bacillota</taxon>
        <taxon>Bacilli</taxon>
        <taxon>Bacillales</taxon>
        <taxon>Anoxybacillaceae</taxon>
        <taxon>Anoxybacillus</taxon>
    </lineage>
</organism>
<evidence type="ECO:0000255" key="1">
    <source>
        <dbReference type="HAMAP-Rule" id="MF_00421"/>
    </source>
</evidence>
<comment type="function">
    <text evidence="1">Part of the phosphoribosylformylglycinamidine synthase complex involved in the purines biosynthetic pathway. Catalyzes the ATP-dependent conversion of formylglycinamide ribonucleotide (FGAR) and glutamine to yield formylglycinamidine ribonucleotide (FGAM) and glutamate. The FGAM synthase complex is composed of three subunits. PurQ produces an ammonia molecule by converting glutamine to glutamate. PurL transfers the ammonia molecule to FGAR to form FGAM in an ATP-dependent manner. PurS interacts with PurQ and PurL and is thought to assist in the transfer of the ammonia molecule from PurQ to PurL.</text>
</comment>
<comment type="catalytic activity">
    <reaction evidence="1">
        <text>N(2)-formyl-N(1)-(5-phospho-beta-D-ribosyl)glycinamide + L-glutamine + ATP + H2O = 2-formamido-N(1)-(5-O-phospho-beta-D-ribosyl)acetamidine + L-glutamate + ADP + phosphate + H(+)</text>
        <dbReference type="Rhea" id="RHEA:17129"/>
        <dbReference type="ChEBI" id="CHEBI:15377"/>
        <dbReference type="ChEBI" id="CHEBI:15378"/>
        <dbReference type="ChEBI" id="CHEBI:29985"/>
        <dbReference type="ChEBI" id="CHEBI:30616"/>
        <dbReference type="ChEBI" id="CHEBI:43474"/>
        <dbReference type="ChEBI" id="CHEBI:58359"/>
        <dbReference type="ChEBI" id="CHEBI:147286"/>
        <dbReference type="ChEBI" id="CHEBI:147287"/>
        <dbReference type="ChEBI" id="CHEBI:456216"/>
        <dbReference type="EC" id="6.3.5.3"/>
    </reaction>
</comment>
<comment type="catalytic activity">
    <reaction evidence="1">
        <text>L-glutamine + H2O = L-glutamate + NH4(+)</text>
        <dbReference type="Rhea" id="RHEA:15889"/>
        <dbReference type="ChEBI" id="CHEBI:15377"/>
        <dbReference type="ChEBI" id="CHEBI:28938"/>
        <dbReference type="ChEBI" id="CHEBI:29985"/>
        <dbReference type="ChEBI" id="CHEBI:58359"/>
        <dbReference type="EC" id="3.5.1.2"/>
    </reaction>
</comment>
<comment type="pathway">
    <text evidence="1">Purine metabolism; IMP biosynthesis via de novo pathway; 5-amino-1-(5-phospho-D-ribosyl)imidazole from N(2)-formyl-N(1)-(5-phospho-D-ribosyl)glycinamide: step 1/2.</text>
</comment>
<comment type="subunit">
    <text evidence="1">Part of the FGAM synthase complex composed of 1 PurL, 1 PurQ and 2 PurS subunits.</text>
</comment>
<comment type="subcellular location">
    <subcellularLocation>
        <location evidence="1">Cytoplasm</location>
    </subcellularLocation>
</comment>
<feature type="chain" id="PRO_1000194842" description="Phosphoribosylformylglycinamidine synthase subunit PurQ">
    <location>
        <begin position="1"/>
        <end position="228"/>
    </location>
</feature>
<feature type="domain" description="Glutamine amidotransferase type-1" evidence="1">
    <location>
        <begin position="3"/>
        <end position="226"/>
    </location>
</feature>
<feature type="active site" description="Nucleophile" evidence="1">
    <location>
        <position position="86"/>
    </location>
</feature>
<feature type="active site" evidence="1">
    <location>
        <position position="195"/>
    </location>
</feature>
<feature type="active site" evidence="1">
    <location>
        <position position="197"/>
    </location>
</feature>
<proteinExistence type="inferred from homology"/>
<accession>B7GFT7</accession>
<name>PURQ_ANOFW</name>
<keyword id="KW-0067">ATP-binding</keyword>
<keyword id="KW-0963">Cytoplasm</keyword>
<keyword id="KW-0315">Glutamine amidotransferase</keyword>
<keyword id="KW-0378">Hydrolase</keyword>
<keyword id="KW-0436">Ligase</keyword>
<keyword id="KW-0547">Nucleotide-binding</keyword>
<keyword id="KW-0658">Purine biosynthesis</keyword>
<dbReference type="EC" id="6.3.5.3" evidence="1"/>
<dbReference type="EC" id="3.5.1.2" evidence="1"/>
<dbReference type="EMBL" id="CP000922">
    <property type="protein sequence ID" value="ACJ32617.1"/>
    <property type="molecule type" value="Genomic_DNA"/>
</dbReference>
<dbReference type="RefSeq" id="WP_012573956.1">
    <property type="nucleotide sequence ID" value="NC_011567.1"/>
</dbReference>
<dbReference type="SMR" id="B7GFT7"/>
<dbReference type="STRING" id="491915.Aflv_0233"/>
<dbReference type="GeneID" id="7036465"/>
<dbReference type="KEGG" id="afl:Aflv_0233"/>
<dbReference type="PATRIC" id="fig|491915.6.peg.239"/>
<dbReference type="eggNOG" id="COG0047">
    <property type="taxonomic scope" value="Bacteria"/>
</dbReference>
<dbReference type="HOGENOM" id="CLU_001031_3_1_9"/>
<dbReference type="UniPathway" id="UPA00074">
    <property type="reaction ID" value="UER00128"/>
</dbReference>
<dbReference type="Proteomes" id="UP000000742">
    <property type="component" value="Chromosome"/>
</dbReference>
<dbReference type="GO" id="GO:0005737">
    <property type="term" value="C:cytoplasm"/>
    <property type="evidence" value="ECO:0007669"/>
    <property type="project" value="UniProtKB-SubCell"/>
</dbReference>
<dbReference type="GO" id="GO:0005524">
    <property type="term" value="F:ATP binding"/>
    <property type="evidence" value="ECO:0007669"/>
    <property type="project" value="UniProtKB-KW"/>
</dbReference>
<dbReference type="GO" id="GO:0004359">
    <property type="term" value="F:glutaminase activity"/>
    <property type="evidence" value="ECO:0007669"/>
    <property type="project" value="UniProtKB-EC"/>
</dbReference>
<dbReference type="GO" id="GO:0004642">
    <property type="term" value="F:phosphoribosylformylglycinamidine synthase activity"/>
    <property type="evidence" value="ECO:0007669"/>
    <property type="project" value="UniProtKB-UniRule"/>
</dbReference>
<dbReference type="GO" id="GO:0006189">
    <property type="term" value="P:'de novo' IMP biosynthetic process"/>
    <property type="evidence" value="ECO:0007669"/>
    <property type="project" value="UniProtKB-UniRule"/>
</dbReference>
<dbReference type="CDD" id="cd01740">
    <property type="entry name" value="GATase1_FGAR_AT"/>
    <property type="match status" value="1"/>
</dbReference>
<dbReference type="FunFam" id="3.40.50.880:FF:000019">
    <property type="entry name" value="Phosphoribosylformylglycinamidine synthase subunit PurQ"/>
    <property type="match status" value="1"/>
</dbReference>
<dbReference type="Gene3D" id="3.40.50.880">
    <property type="match status" value="1"/>
</dbReference>
<dbReference type="HAMAP" id="MF_00421">
    <property type="entry name" value="PurQ"/>
    <property type="match status" value="1"/>
</dbReference>
<dbReference type="InterPro" id="IPR029062">
    <property type="entry name" value="Class_I_gatase-like"/>
</dbReference>
<dbReference type="InterPro" id="IPR010075">
    <property type="entry name" value="PRibForGlyAmidine_synth_PurQ"/>
</dbReference>
<dbReference type="NCBIfam" id="TIGR01737">
    <property type="entry name" value="FGAM_synth_I"/>
    <property type="match status" value="1"/>
</dbReference>
<dbReference type="NCBIfam" id="NF002957">
    <property type="entry name" value="PRK03619.1"/>
    <property type="match status" value="1"/>
</dbReference>
<dbReference type="PANTHER" id="PTHR47552">
    <property type="entry name" value="PHOSPHORIBOSYLFORMYLGLYCINAMIDINE SYNTHASE SUBUNIT PURQ"/>
    <property type="match status" value="1"/>
</dbReference>
<dbReference type="PANTHER" id="PTHR47552:SF1">
    <property type="entry name" value="PHOSPHORIBOSYLFORMYLGLYCINAMIDINE SYNTHASE SUBUNIT PURQ"/>
    <property type="match status" value="1"/>
</dbReference>
<dbReference type="Pfam" id="PF13507">
    <property type="entry name" value="GATase_5"/>
    <property type="match status" value="1"/>
</dbReference>
<dbReference type="PIRSF" id="PIRSF001586">
    <property type="entry name" value="FGAM_synth_I"/>
    <property type="match status" value="1"/>
</dbReference>
<dbReference type="SMART" id="SM01211">
    <property type="entry name" value="GATase_5"/>
    <property type="match status" value="1"/>
</dbReference>
<dbReference type="SUPFAM" id="SSF52317">
    <property type="entry name" value="Class I glutamine amidotransferase-like"/>
    <property type="match status" value="1"/>
</dbReference>
<dbReference type="PROSITE" id="PS51273">
    <property type="entry name" value="GATASE_TYPE_1"/>
    <property type="match status" value="1"/>
</dbReference>
<gene>
    <name evidence="1" type="primary">purQ</name>
    <name type="ordered locus">Aflv_0233</name>
</gene>
<reference key="1">
    <citation type="journal article" date="2008" name="Genome Biol.">
        <title>Encapsulated in silica: genome, proteome and physiology of the thermophilic bacterium Anoxybacillus flavithermus WK1.</title>
        <authorList>
            <person name="Saw J.H."/>
            <person name="Mountain B.W."/>
            <person name="Feng L."/>
            <person name="Omelchenko M.V."/>
            <person name="Hou S."/>
            <person name="Saito J.A."/>
            <person name="Stott M.B."/>
            <person name="Li D."/>
            <person name="Zhao G."/>
            <person name="Wu J."/>
            <person name="Galperin M.Y."/>
            <person name="Koonin E.V."/>
            <person name="Makarova K.S."/>
            <person name="Wolf Y.I."/>
            <person name="Rigden D.J."/>
            <person name="Dunfield P.F."/>
            <person name="Wang L."/>
            <person name="Alam M."/>
        </authorList>
    </citation>
    <scope>NUCLEOTIDE SEQUENCE [LARGE SCALE GENOMIC DNA]</scope>
    <source>
        <strain>DSM 21510 / WK1</strain>
    </source>
</reference>
<protein>
    <recommendedName>
        <fullName evidence="1">Phosphoribosylformylglycinamidine synthase subunit PurQ</fullName>
        <shortName evidence="1">FGAM synthase</shortName>
        <ecNumber evidence="1">6.3.5.3</ecNumber>
    </recommendedName>
    <alternativeName>
        <fullName evidence="1">Formylglycinamide ribonucleotide amidotransferase subunit I</fullName>
        <shortName evidence="1">FGAR amidotransferase I</shortName>
        <shortName evidence="1">FGAR-AT I</shortName>
    </alternativeName>
    <alternativeName>
        <fullName evidence="1">Glutaminase PurQ</fullName>
        <ecNumber evidence="1">3.5.1.2</ecNumber>
    </alternativeName>
    <alternativeName>
        <fullName evidence="1">Phosphoribosylformylglycinamidine synthase subunit I</fullName>
    </alternativeName>
</protein>
<sequence>MKFAVVVFPGSNCDVDMYHAISDELGEEVEYVWHDVDCLDDFDAILLPGGFSYGDYLRSGAIARFSNVMKAIKKAADEGKPILGVCNGFQILLEAGLLPGAMRRNNTLTFICRPIKLRVENNETMFTSQYEQGEVITIPIAHGEGNYYCDEQTLQQLIANNQIVFRYEGENPNGSLFNIAGIVNEKGNVLGMMPHPERAVHELLGGADGLKLFQSIVTYWRDAHVVTT</sequence>